<name>FOLD_BARBK</name>
<accession>A1URL6</accession>
<comment type="function">
    <text evidence="1">Catalyzes the oxidation of 5,10-methylenetetrahydrofolate to 5,10-methenyltetrahydrofolate and then the hydrolysis of 5,10-methenyltetrahydrofolate to 10-formyltetrahydrofolate.</text>
</comment>
<comment type="catalytic activity">
    <reaction evidence="1">
        <text>(6R)-5,10-methylene-5,6,7,8-tetrahydrofolate + NADP(+) = (6R)-5,10-methenyltetrahydrofolate + NADPH</text>
        <dbReference type="Rhea" id="RHEA:22812"/>
        <dbReference type="ChEBI" id="CHEBI:15636"/>
        <dbReference type="ChEBI" id="CHEBI:57455"/>
        <dbReference type="ChEBI" id="CHEBI:57783"/>
        <dbReference type="ChEBI" id="CHEBI:58349"/>
        <dbReference type="EC" id="1.5.1.5"/>
    </reaction>
</comment>
<comment type="catalytic activity">
    <reaction evidence="1">
        <text>(6R)-5,10-methenyltetrahydrofolate + H2O = (6R)-10-formyltetrahydrofolate + H(+)</text>
        <dbReference type="Rhea" id="RHEA:23700"/>
        <dbReference type="ChEBI" id="CHEBI:15377"/>
        <dbReference type="ChEBI" id="CHEBI:15378"/>
        <dbReference type="ChEBI" id="CHEBI:57455"/>
        <dbReference type="ChEBI" id="CHEBI:195366"/>
        <dbReference type="EC" id="3.5.4.9"/>
    </reaction>
</comment>
<comment type="pathway">
    <text evidence="1">One-carbon metabolism; tetrahydrofolate interconversion.</text>
</comment>
<comment type="subunit">
    <text evidence="1">Homodimer.</text>
</comment>
<comment type="similarity">
    <text evidence="1">Belongs to the tetrahydrofolate dehydrogenase/cyclohydrolase family.</text>
</comment>
<gene>
    <name evidence="1" type="primary">folD</name>
    <name type="ordered locus">BARBAKC583_0297</name>
</gene>
<evidence type="ECO:0000255" key="1">
    <source>
        <dbReference type="HAMAP-Rule" id="MF_01576"/>
    </source>
</evidence>
<protein>
    <recommendedName>
        <fullName evidence="1">Bifunctional protein FolD</fullName>
    </recommendedName>
    <domain>
        <recommendedName>
            <fullName evidence="1">Methylenetetrahydrofolate dehydrogenase</fullName>
            <ecNumber evidence="1">1.5.1.5</ecNumber>
        </recommendedName>
    </domain>
    <domain>
        <recommendedName>
            <fullName evidence="1">Methenyltetrahydrofolate cyclohydrolase</fullName>
            <ecNumber evidence="1">3.5.4.9</ecNumber>
        </recommendedName>
    </domain>
</protein>
<dbReference type="EC" id="1.5.1.5" evidence="1"/>
<dbReference type="EC" id="3.5.4.9" evidence="1"/>
<dbReference type="EMBL" id="CP000524">
    <property type="protein sequence ID" value="ABM44510.1"/>
    <property type="molecule type" value="Genomic_DNA"/>
</dbReference>
<dbReference type="RefSeq" id="WP_005766197.1">
    <property type="nucleotide sequence ID" value="NC_008783.1"/>
</dbReference>
<dbReference type="SMR" id="A1URL6"/>
<dbReference type="STRING" id="360095.BARBAKC583_0297"/>
<dbReference type="GeneID" id="4684160"/>
<dbReference type="KEGG" id="bbk:BARBAKC583_0297"/>
<dbReference type="PATRIC" id="fig|360095.6.peg.284"/>
<dbReference type="eggNOG" id="COG0190">
    <property type="taxonomic scope" value="Bacteria"/>
</dbReference>
<dbReference type="HOGENOM" id="CLU_034045_2_1_5"/>
<dbReference type="OrthoDB" id="9803580at2"/>
<dbReference type="UniPathway" id="UPA00193"/>
<dbReference type="Proteomes" id="UP000000643">
    <property type="component" value="Chromosome"/>
</dbReference>
<dbReference type="GO" id="GO:0005829">
    <property type="term" value="C:cytosol"/>
    <property type="evidence" value="ECO:0007669"/>
    <property type="project" value="TreeGrafter"/>
</dbReference>
<dbReference type="GO" id="GO:0004477">
    <property type="term" value="F:methenyltetrahydrofolate cyclohydrolase activity"/>
    <property type="evidence" value="ECO:0007669"/>
    <property type="project" value="UniProtKB-UniRule"/>
</dbReference>
<dbReference type="GO" id="GO:0004488">
    <property type="term" value="F:methylenetetrahydrofolate dehydrogenase (NADP+) activity"/>
    <property type="evidence" value="ECO:0007669"/>
    <property type="project" value="UniProtKB-UniRule"/>
</dbReference>
<dbReference type="GO" id="GO:0000105">
    <property type="term" value="P:L-histidine biosynthetic process"/>
    <property type="evidence" value="ECO:0007669"/>
    <property type="project" value="UniProtKB-KW"/>
</dbReference>
<dbReference type="GO" id="GO:0009086">
    <property type="term" value="P:methionine biosynthetic process"/>
    <property type="evidence" value="ECO:0007669"/>
    <property type="project" value="UniProtKB-KW"/>
</dbReference>
<dbReference type="GO" id="GO:0006164">
    <property type="term" value="P:purine nucleotide biosynthetic process"/>
    <property type="evidence" value="ECO:0007669"/>
    <property type="project" value="UniProtKB-KW"/>
</dbReference>
<dbReference type="GO" id="GO:0035999">
    <property type="term" value="P:tetrahydrofolate interconversion"/>
    <property type="evidence" value="ECO:0007669"/>
    <property type="project" value="UniProtKB-UniRule"/>
</dbReference>
<dbReference type="CDD" id="cd01080">
    <property type="entry name" value="NAD_bind_m-THF_DH_Cyclohyd"/>
    <property type="match status" value="1"/>
</dbReference>
<dbReference type="FunFam" id="3.40.50.720:FF:000006">
    <property type="entry name" value="Bifunctional protein FolD"/>
    <property type="match status" value="1"/>
</dbReference>
<dbReference type="FunFam" id="3.40.50.10860:FF:000005">
    <property type="entry name" value="C-1-tetrahydrofolate synthase, cytoplasmic, putative"/>
    <property type="match status" value="1"/>
</dbReference>
<dbReference type="Gene3D" id="3.40.50.10860">
    <property type="entry name" value="Leucine Dehydrogenase, chain A, domain 1"/>
    <property type="match status" value="1"/>
</dbReference>
<dbReference type="Gene3D" id="3.40.50.720">
    <property type="entry name" value="NAD(P)-binding Rossmann-like Domain"/>
    <property type="match status" value="1"/>
</dbReference>
<dbReference type="HAMAP" id="MF_01576">
    <property type="entry name" value="THF_DHG_CYH"/>
    <property type="match status" value="1"/>
</dbReference>
<dbReference type="InterPro" id="IPR046346">
    <property type="entry name" value="Aminoacid_DH-like_N_sf"/>
</dbReference>
<dbReference type="InterPro" id="IPR036291">
    <property type="entry name" value="NAD(P)-bd_dom_sf"/>
</dbReference>
<dbReference type="InterPro" id="IPR000672">
    <property type="entry name" value="THF_DH/CycHdrlase"/>
</dbReference>
<dbReference type="InterPro" id="IPR020630">
    <property type="entry name" value="THF_DH/CycHdrlase_cat_dom"/>
</dbReference>
<dbReference type="InterPro" id="IPR020867">
    <property type="entry name" value="THF_DH/CycHdrlase_CS"/>
</dbReference>
<dbReference type="InterPro" id="IPR020631">
    <property type="entry name" value="THF_DH/CycHdrlase_NAD-bd_dom"/>
</dbReference>
<dbReference type="NCBIfam" id="NF010783">
    <property type="entry name" value="PRK14186.1"/>
    <property type="match status" value="1"/>
</dbReference>
<dbReference type="NCBIfam" id="NF010785">
    <property type="entry name" value="PRK14188.1"/>
    <property type="match status" value="1"/>
</dbReference>
<dbReference type="PANTHER" id="PTHR48099:SF5">
    <property type="entry name" value="C-1-TETRAHYDROFOLATE SYNTHASE, CYTOPLASMIC"/>
    <property type="match status" value="1"/>
</dbReference>
<dbReference type="PANTHER" id="PTHR48099">
    <property type="entry name" value="C-1-TETRAHYDROFOLATE SYNTHASE, CYTOPLASMIC-RELATED"/>
    <property type="match status" value="1"/>
</dbReference>
<dbReference type="Pfam" id="PF00763">
    <property type="entry name" value="THF_DHG_CYH"/>
    <property type="match status" value="1"/>
</dbReference>
<dbReference type="Pfam" id="PF02882">
    <property type="entry name" value="THF_DHG_CYH_C"/>
    <property type="match status" value="1"/>
</dbReference>
<dbReference type="PRINTS" id="PR00085">
    <property type="entry name" value="THFDHDRGNASE"/>
</dbReference>
<dbReference type="SUPFAM" id="SSF53223">
    <property type="entry name" value="Aminoacid dehydrogenase-like, N-terminal domain"/>
    <property type="match status" value="1"/>
</dbReference>
<dbReference type="SUPFAM" id="SSF51735">
    <property type="entry name" value="NAD(P)-binding Rossmann-fold domains"/>
    <property type="match status" value="1"/>
</dbReference>
<dbReference type="PROSITE" id="PS00766">
    <property type="entry name" value="THF_DHG_CYH_1"/>
    <property type="match status" value="1"/>
</dbReference>
<dbReference type="PROSITE" id="PS00767">
    <property type="entry name" value="THF_DHG_CYH_2"/>
    <property type="match status" value="1"/>
</dbReference>
<feature type="chain" id="PRO_0000305796" description="Bifunctional protein FolD">
    <location>
        <begin position="1"/>
        <end position="299"/>
    </location>
</feature>
<feature type="binding site" evidence="1">
    <location>
        <begin position="168"/>
        <end position="170"/>
    </location>
    <ligand>
        <name>NADP(+)</name>
        <dbReference type="ChEBI" id="CHEBI:58349"/>
    </ligand>
</feature>
<feature type="binding site" evidence="1">
    <location>
        <position position="193"/>
    </location>
    <ligand>
        <name>NADP(+)</name>
        <dbReference type="ChEBI" id="CHEBI:58349"/>
    </ligand>
</feature>
<feature type="binding site" evidence="1">
    <location>
        <position position="234"/>
    </location>
    <ligand>
        <name>NADP(+)</name>
        <dbReference type="ChEBI" id="CHEBI:58349"/>
    </ligand>
</feature>
<sequence>MDNIIDGKKLAENVIAKVKNETEKLKNSHNIQPGIAVIIVGDDPASQVYVASKSKKAEECGFFSMKHVLPKEVEESELLQLIEILNSDPKIHGILVQLPLPAHINTDRATQAIAVEKDVDGFHYINIGKLAANAIKDAIIPCTPAGAMMMIEQQCGQDLSGLNAVIVGRSNIVGKPMAALLTAANATVTLAHSRTRDLDEICRRADILIAAVGRPQMIKKHWVKKGAIVIDVGINRIAAPEKGPGKTRLVGDVDFEEVKGKTLAITPVPGGVGPMTIAMLMVNTLKAAARSLKLPVPKF</sequence>
<proteinExistence type="inferred from homology"/>
<organism>
    <name type="scientific">Bartonella bacilliformis (strain ATCC 35685 / KC583 / Herrer 020/F12,63)</name>
    <dbReference type="NCBI Taxonomy" id="360095"/>
    <lineage>
        <taxon>Bacteria</taxon>
        <taxon>Pseudomonadati</taxon>
        <taxon>Pseudomonadota</taxon>
        <taxon>Alphaproteobacteria</taxon>
        <taxon>Hyphomicrobiales</taxon>
        <taxon>Bartonellaceae</taxon>
        <taxon>Bartonella</taxon>
    </lineage>
</organism>
<reference key="1">
    <citation type="submission" date="2006-12" db="EMBL/GenBank/DDBJ databases">
        <authorList>
            <person name="Hendrix L."/>
            <person name="Mohamoud Y."/>
            <person name="Radune D."/>
            <person name="Shvartsbeyn A."/>
            <person name="Daugherty S."/>
            <person name="Dodson R."/>
            <person name="Durkin A.S."/>
            <person name="Harkins D."/>
            <person name="Huot H."/>
            <person name="Kothari S.P."/>
            <person name="Madupu R."/>
            <person name="Li J."/>
            <person name="Nelson W.C."/>
            <person name="Shrivastava S."/>
            <person name="Giglio M.G."/>
            <person name="Haft D."/>
            <person name="Selengut J."/>
            <person name="Fraser-Ligget C."/>
            <person name="Seshadri R."/>
        </authorList>
    </citation>
    <scope>NUCLEOTIDE SEQUENCE [LARGE SCALE GENOMIC DNA]</scope>
    <source>
        <strain>ATCC 35685 / KC583 / Herrer 020/F12,63</strain>
    </source>
</reference>
<keyword id="KW-0028">Amino-acid biosynthesis</keyword>
<keyword id="KW-0368">Histidine biosynthesis</keyword>
<keyword id="KW-0378">Hydrolase</keyword>
<keyword id="KW-0486">Methionine biosynthesis</keyword>
<keyword id="KW-0511">Multifunctional enzyme</keyword>
<keyword id="KW-0521">NADP</keyword>
<keyword id="KW-0554">One-carbon metabolism</keyword>
<keyword id="KW-0560">Oxidoreductase</keyword>
<keyword id="KW-0658">Purine biosynthesis</keyword>